<sequence length="92" mass="9760">MKFALALCAAVLLVVLVQAEEKCTPGQVKQQDCNTCTCTPTGVWGCTRKGCQPAKREISCEPGKTFKDKCNTCRCGADGKSAACTLKACPNQ</sequence>
<feature type="signal peptide" evidence="2 3">
    <location>
        <begin position="1"/>
        <end position="19"/>
    </location>
</feature>
<feature type="peptide" id="PRO_0000026708" description="Protease inhibitor LCMI-I">
    <location>
        <begin position="20"/>
        <end position="54"/>
    </location>
</feature>
<feature type="peptide" id="PRO_0000026709" description="Protease inhibitor LCMI-II">
    <location>
        <begin position="57"/>
        <end position="92"/>
    </location>
</feature>
<feature type="domain" description="Pacifastin 1" evidence="1">
    <location>
        <begin position="20"/>
        <end position="54"/>
    </location>
</feature>
<feature type="domain" description="Pacifastin 2" evidence="1">
    <location>
        <begin position="57"/>
        <end position="92"/>
    </location>
</feature>
<feature type="site" description="Reactive bond">
    <location>
        <begin position="48"/>
        <end position="49"/>
    </location>
</feature>
<feature type="site" description="Reactive bond">
    <location>
        <begin position="86"/>
        <end position="87"/>
    </location>
</feature>
<feature type="glycosylation site" description="O-linked (Fuc) threonine" evidence="5">
    <location>
        <position position="65"/>
    </location>
</feature>
<feature type="disulfide bond" evidence="1 4">
    <location>
        <begin position="23"/>
        <end position="38"/>
    </location>
</feature>
<feature type="disulfide bond" evidence="1 4">
    <location>
        <begin position="33"/>
        <end position="51"/>
    </location>
</feature>
<feature type="disulfide bond" evidence="1 4">
    <location>
        <begin position="36"/>
        <end position="46"/>
    </location>
</feature>
<feature type="disulfide bond" evidence="1 4">
    <location>
        <begin position="60"/>
        <end position="75"/>
    </location>
</feature>
<feature type="disulfide bond" evidence="1 4">
    <location>
        <begin position="70"/>
        <end position="89"/>
    </location>
</feature>
<feature type="disulfide bond" evidence="1 4">
    <location>
        <begin position="73"/>
        <end position="84"/>
    </location>
</feature>
<feature type="strand" evidence="6">
    <location>
        <begin position="28"/>
        <end position="30"/>
    </location>
</feature>
<feature type="strand" evidence="6">
    <location>
        <begin position="35"/>
        <end position="38"/>
    </location>
</feature>
<feature type="strand" evidence="6">
    <location>
        <begin position="44"/>
        <end position="47"/>
    </location>
</feature>
<feature type="strand" evidence="7">
    <location>
        <begin position="65"/>
        <end position="67"/>
    </location>
</feature>
<feature type="strand" evidence="8">
    <location>
        <begin position="68"/>
        <end position="75"/>
    </location>
</feature>
<feature type="strand" evidence="8">
    <location>
        <begin position="82"/>
        <end position="87"/>
    </location>
</feature>
<reference key="1">
    <citation type="submission" date="1993-05" db="EMBL/GenBank/DDBJ databases">
        <authorList>
            <person name="Lagueux M.L."/>
        </authorList>
    </citation>
    <scope>NUCLEOTIDE SEQUENCE [MRNA]</scope>
    <source>
        <tissue>Fat body</tissue>
    </source>
</reference>
<reference key="2">
    <citation type="journal article" date="1994" name="Insect Biochem. Mol. Biol.">
        <title>Cloning of a Locusta cDNA encoding a precursor peptide for two structurally related proteinase inhibitors.</title>
        <authorList>
            <person name="Kromer E."/>
            <person name="Nakakura N."/>
            <person name="Lagueux M."/>
        </authorList>
    </citation>
    <scope>NUCLEOTIDE SEQUENCE [MRNA] OF 1-16</scope>
    <source>
        <tissue>Fat body</tissue>
    </source>
</reference>
<reference key="3">
    <citation type="journal article" date="1992" name="Eur. J. Biochem.">
        <title>Isolation and structural determination of three peptides from the insect Locusta migratoria. Identification of a deoxyhexose-linked peptide.</title>
        <authorList>
            <person name="Nakakura N."/>
            <person name="Hietter H."/>
            <person name="van Dorsselaer A."/>
            <person name="Luu B."/>
        </authorList>
    </citation>
    <scope>PROTEIN SEQUENCE OF 20-54 AND 57-92</scope>
    <source>
        <tissue>Pars intercerebralis</tissue>
    </source>
</reference>
<reference key="4">
    <citation type="journal article" date="1992" name="Biochem. Biophys. Res. Commun.">
        <title>Insect immunity: two proteinase inhibitors from hemolymph of Locusta migratoria.</title>
        <authorList>
            <person name="Boigegrain R.-A."/>
            <person name="Mattras H."/>
            <person name="Brehelin M."/>
            <person name="Paroutaud P."/>
            <person name="Coletti-Previero M.-A."/>
        </authorList>
    </citation>
    <scope>PROTEIN SEQUENCE OF 20-54 AND 57-92</scope>
    <source>
        <tissue>Hemolymph</tissue>
    </source>
</reference>
<reference key="5">
    <citation type="journal article" date="1994" name="Biochemistry">
        <title>Solution structure of PMP-D2, a 35-residue peptide isolated from the insect Locusta migratoria.</title>
        <authorList>
            <person name="Mer G."/>
            <person name="Kellenberger C."/>
            <person name="Koehl P."/>
            <person name="Stote R."/>
            <person name="Sorokine O."/>
            <person name="van Dorsselaer A."/>
            <person name="Luu B."/>
            <person name="Hietter H."/>
            <person name="Lefevre J.-F."/>
        </authorList>
    </citation>
    <scope>STRUCTURE BY NMR OF LMCI-I</scope>
    <scope>DISULFIDE BONDS</scope>
</reference>
<reference key="6">
    <citation type="journal article" date="1996" name="Nat. Struct. Biol.">
        <title>Stabilization of proteins by glycosylation examined by NMR analysis of a fucosylated proteinase inhibitor.</title>
        <authorList>
            <person name="Mer G."/>
            <person name="Hietter H."/>
            <person name="Lefevre J.-F."/>
        </authorList>
    </citation>
    <scope>STRUCTURE BY NMR OF LMCI-II</scope>
</reference>
<reference key="7">
    <citation type="journal article" date="1996" name="J. Mol. Biol.">
        <title>Solution structure of PMP-C: a new fold in the group of small serine proteinase inhibitors.</title>
        <authorList>
            <person name="Mer G."/>
            <person name="Hietter H."/>
            <person name="Kellenberger C."/>
            <person name="Renatus M."/>
            <person name="Luu B."/>
            <person name="Lefevre J.-F."/>
        </authorList>
    </citation>
    <scope>STRUCTURE BY NMR OF LMCI-II</scope>
</reference>
<evidence type="ECO:0000255" key="1">
    <source>
        <dbReference type="PROSITE-ProRule" id="PRU00776"/>
    </source>
</evidence>
<evidence type="ECO:0000269" key="2">
    <source>
    </source>
</evidence>
<evidence type="ECO:0000269" key="3">
    <source>
    </source>
</evidence>
<evidence type="ECO:0000269" key="4">
    <source>
    </source>
</evidence>
<evidence type="ECO:0000269" key="5">
    <source>
    </source>
</evidence>
<evidence type="ECO:0007829" key="6">
    <source>
        <dbReference type="PDB" id="1GL0"/>
    </source>
</evidence>
<evidence type="ECO:0007829" key="7">
    <source>
        <dbReference type="PDB" id="1GL1"/>
    </source>
</evidence>
<evidence type="ECO:0007829" key="8">
    <source>
        <dbReference type="PDB" id="7SLT"/>
    </source>
</evidence>
<comment type="function">
    <text>Both LCMI I and II are inhibitors of chymotrypsin and elastase (in vitro). They both inhibit the prophenol oxidase activation cascade.</text>
</comment>
<comment type="subcellular location">
    <subcellularLocation>
        <location>Secreted</location>
    </subcellularLocation>
</comment>
<comment type="tissue specificity">
    <text>Brain and fat body.</text>
</comment>
<comment type="similarity">
    <text evidence="1">Belongs to the protease inhibitor I19 family.</text>
</comment>
<protein>
    <recommendedName>
        <fullName>Protease inhibitors</fullName>
    </recommendedName>
    <component>
        <recommendedName>
            <fullName>Protease inhibitor LCMI-I</fullName>
        </recommendedName>
        <alternativeName>
            <fullName>PARS intercerebralis major peptide D2</fullName>
            <shortName>PMP-D2</shortName>
        </alternativeName>
    </component>
    <component>
        <recommendedName>
            <fullName>Protease inhibitor LCMI-II</fullName>
        </recommendedName>
        <alternativeName>
            <fullName>PARS intercerebralis major peptide C</fullName>
            <shortName>PMP-C</shortName>
        </alternativeName>
    </component>
</protein>
<organism>
    <name type="scientific">Locusta migratoria</name>
    <name type="common">Migratory locust</name>
    <dbReference type="NCBI Taxonomy" id="7004"/>
    <lineage>
        <taxon>Eukaryota</taxon>
        <taxon>Metazoa</taxon>
        <taxon>Ecdysozoa</taxon>
        <taxon>Arthropoda</taxon>
        <taxon>Hexapoda</taxon>
        <taxon>Insecta</taxon>
        <taxon>Pterygota</taxon>
        <taxon>Neoptera</taxon>
        <taxon>Polyneoptera</taxon>
        <taxon>Orthoptera</taxon>
        <taxon>Caelifera</taxon>
        <taxon>Acrididea</taxon>
        <taxon>Acridomorpha</taxon>
        <taxon>Acridoidea</taxon>
        <taxon>Acrididae</taxon>
        <taxon>Oedipodinae</taxon>
        <taxon>Locusta</taxon>
    </lineage>
</organism>
<proteinExistence type="evidence at protein level"/>
<name>LCM_LOCMI</name>
<accession>P80060</accession>
<accession>P80058</accession>
<dbReference type="EMBL" id="Z22805">
    <property type="protein sequence ID" value="CAA80462.1"/>
    <property type="molecule type" value="mRNA"/>
</dbReference>
<dbReference type="PIR" id="S36658">
    <property type="entry name" value="S36658"/>
</dbReference>
<dbReference type="PDB" id="1GL0">
    <property type="method" value="X-ray"/>
    <property type="resolution" value="3.00 A"/>
    <property type="chains" value="I=20-54"/>
</dbReference>
<dbReference type="PDB" id="1GL1">
    <property type="method" value="X-ray"/>
    <property type="resolution" value="2.10 A"/>
    <property type="chains" value="I/J/K=57-92"/>
</dbReference>
<dbReference type="PDB" id="1PMC">
    <property type="method" value="NMR"/>
    <property type="chains" value="A=57-92"/>
</dbReference>
<dbReference type="PDB" id="7SGQ">
    <property type="method" value="X-ray"/>
    <property type="resolution" value="2.09 A"/>
    <property type="chains" value="A/B/C/D/E/F=59-92"/>
</dbReference>
<dbReference type="PDB" id="7SLT">
    <property type="method" value="X-ray"/>
    <property type="resolution" value="2.00 A"/>
    <property type="chains" value="A/B/C/D=59-92"/>
</dbReference>
<dbReference type="PDBsum" id="1GL0"/>
<dbReference type="PDBsum" id="1GL1"/>
<dbReference type="PDBsum" id="1PMC"/>
<dbReference type="PDBsum" id="7SGQ"/>
<dbReference type="PDBsum" id="7SLT"/>
<dbReference type="SMR" id="P80060"/>
<dbReference type="MINT" id="P80060"/>
<dbReference type="MEROPS" id="I19.001"/>
<dbReference type="MEROPS" id="I19.011"/>
<dbReference type="iPTMnet" id="P80060"/>
<dbReference type="EvolutionaryTrace" id="P80060"/>
<dbReference type="GO" id="GO:0005576">
    <property type="term" value="C:extracellular region"/>
    <property type="evidence" value="ECO:0007669"/>
    <property type="project" value="UniProtKB-SubCell"/>
</dbReference>
<dbReference type="GO" id="GO:0004867">
    <property type="term" value="F:serine-type endopeptidase inhibitor activity"/>
    <property type="evidence" value="ECO:0007669"/>
    <property type="project" value="UniProtKB-KW"/>
</dbReference>
<dbReference type="InterPro" id="IPR008037">
    <property type="entry name" value="Pacifastin_dom"/>
</dbReference>
<dbReference type="InterPro" id="IPR036201">
    <property type="entry name" value="Pacifastin_dom_sf"/>
</dbReference>
<dbReference type="InterPro" id="IPR016307">
    <property type="entry name" value="Prtase-inh_pacifastin"/>
</dbReference>
<dbReference type="Pfam" id="PF05375">
    <property type="entry name" value="Pacifastin_I"/>
    <property type="match status" value="2"/>
</dbReference>
<dbReference type="PIRSF" id="PIRSF001625">
    <property type="entry name" value="Prot_inhib_pacifastin"/>
    <property type="match status" value="1"/>
</dbReference>
<dbReference type="SUPFAM" id="SSF57283">
    <property type="entry name" value="PMP inhibitors"/>
    <property type="match status" value="2"/>
</dbReference>
<dbReference type="PROSITE" id="PS51446">
    <property type="entry name" value="PACIFASTIN"/>
    <property type="match status" value="2"/>
</dbReference>
<keyword id="KW-0002">3D-structure</keyword>
<keyword id="KW-0165">Cleavage on pair of basic residues</keyword>
<keyword id="KW-0903">Direct protein sequencing</keyword>
<keyword id="KW-1015">Disulfide bond</keyword>
<keyword id="KW-0325">Glycoprotein</keyword>
<keyword id="KW-0646">Protease inhibitor</keyword>
<keyword id="KW-0677">Repeat</keyword>
<keyword id="KW-0964">Secreted</keyword>
<keyword id="KW-0722">Serine protease inhibitor</keyword>
<keyword id="KW-0732">Signal</keyword>